<reference key="1">
    <citation type="journal article" date="1994" name="Curr. Top. Microbiol. Immunol.">
        <title>Primer-directed sequencing of human papillomavirus types.</title>
        <authorList>
            <person name="Delius H."/>
            <person name="Hofmann B."/>
        </authorList>
    </citation>
    <scope>NUCLEOTIDE SEQUENCE [GENOMIC DNA]</scope>
</reference>
<protein>
    <recommendedName>
        <fullName evidence="1">Regulatory protein E2</fullName>
    </recommendedName>
</protein>
<comment type="function">
    <text evidence="1">Plays a role in the initiation of viral DNA replication. A dimer of E2 interacts with a dimer of E1 in order to improve specificity of E1 DNA binding activity. Once the complex recognizes and binds DNA at specific sites, the E2 dimer is removed from DNA. E2 also regulates viral transcription through binding to the E2RE response element (5'-ACCNNNNNNGGT-3') present in multiple copies in the regulatory regions of the viral genome. Activates or represses transcription depending on E2RE's position with regards to proximal promoter elements including the TATA-box. Repression occurs by sterically hindering the assembly of the transcription initiation complex.</text>
</comment>
<comment type="subunit">
    <text evidence="1">Binds DNA as homodimer. Interacts with protein E1; this interaction greatly increases E1 DNA-binding activity. Interacts with protein L1; this interaction enhances E2-dependent replication and transcription activation. Interacts with protein L2; this interaction inhibits E2 transcriptional activity but not DNA replication function E2. Interacts with protein E7; this interaction inhibits E7 oncogenic activity. Interacts with host TAF1; this interaction modulates E2-dependent transcriptional regulation. Interacts with host BRD4; this interaction mediates E2 transcriptional activation function. Additionally, the interaction with host BRD4 on mitotic chromosomes mediates tethering of the viral genome. Interacts with host TOPBP1; this interaction is required for optimal viral DNA replication.</text>
</comment>
<comment type="subcellular location">
    <subcellularLocation>
        <location evidence="1">Host nucleus</location>
    </subcellularLocation>
</comment>
<comment type="PTM">
    <text evidence="1">Phosphorylated.</text>
</comment>
<comment type="similarity">
    <text evidence="1">Belongs to the papillomaviridae E2 protein family.</text>
</comment>
<dbReference type="EMBL" id="X74468">
    <property type="protein sequence ID" value="CAA52509.1"/>
    <property type="molecule type" value="Genomic_DNA"/>
</dbReference>
<dbReference type="PIR" id="S36476">
    <property type="entry name" value="S36476"/>
</dbReference>
<dbReference type="SMR" id="P36784"/>
<dbReference type="Proteomes" id="UP000008232">
    <property type="component" value="Genome"/>
</dbReference>
<dbReference type="GO" id="GO:0042025">
    <property type="term" value="C:host cell nucleus"/>
    <property type="evidence" value="ECO:0007669"/>
    <property type="project" value="UniProtKB-SubCell"/>
</dbReference>
<dbReference type="GO" id="GO:0003677">
    <property type="term" value="F:DNA binding"/>
    <property type="evidence" value="ECO:0007669"/>
    <property type="project" value="UniProtKB-UniRule"/>
</dbReference>
<dbReference type="GO" id="GO:0003700">
    <property type="term" value="F:DNA-binding transcription factor activity"/>
    <property type="evidence" value="ECO:0007669"/>
    <property type="project" value="UniProtKB-UniRule"/>
</dbReference>
<dbReference type="GO" id="GO:0000166">
    <property type="term" value="F:nucleotide binding"/>
    <property type="evidence" value="ECO:0007669"/>
    <property type="project" value="UniProtKB-UniRule"/>
</dbReference>
<dbReference type="GO" id="GO:0006260">
    <property type="term" value="P:DNA replication"/>
    <property type="evidence" value="ECO:0007669"/>
    <property type="project" value="UniProtKB-KW"/>
</dbReference>
<dbReference type="GO" id="GO:0006351">
    <property type="term" value="P:DNA-templated transcription"/>
    <property type="evidence" value="ECO:0007669"/>
    <property type="project" value="UniProtKB-UniRule"/>
</dbReference>
<dbReference type="GO" id="GO:0006275">
    <property type="term" value="P:regulation of DNA replication"/>
    <property type="evidence" value="ECO:0007669"/>
    <property type="project" value="UniProtKB-UniRule"/>
</dbReference>
<dbReference type="GO" id="GO:0039693">
    <property type="term" value="P:viral DNA genome replication"/>
    <property type="evidence" value="ECO:0007669"/>
    <property type="project" value="UniProtKB-UniRule"/>
</dbReference>
<dbReference type="Gene3D" id="3.30.70.330">
    <property type="match status" value="1"/>
</dbReference>
<dbReference type="Gene3D" id="2.170.200.10">
    <property type="entry name" value="Papillomavirus E2 early protein domain"/>
    <property type="match status" value="1"/>
</dbReference>
<dbReference type="HAMAP" id="MF_04001">
    <property type="entry name" value="PPV_E2"/>
    <property type="match status" value="1"/>
</dbReference>
<dbReference type="InterPro" id="IPR035975">
    <property type="entry name" value="E2/EBNA1_C_sf"/>
</dbReference>
<dbReference type="InterPro" id="IPR012677">
    <property type="entry name" value="Nucleotide-bd_a/b_plait_sf"/>
</dbReference>
<dbReference type="InterPro" id="IPR000427">
    <property type="entry name" value="Papillomavirus_E2_C"/>
</dbReference>
<dbReference type="InterPro" id="IPR001866">
    <property type="entry name" value="PPV_E2_N"/>
</dbReference>
<dbReference type="InterPro" id="IPR033668">
    <property type="entry name" value="Reg_prot_E2"/>
</dbReference>
<dbReference type="InterPro" id="IPR036050">
    <property type="entry name" value="Regulatory_protein_E2_N"/>
</dbReference>
<dbReference type="InterPro" id="IPR042504">
    <property type="entry name" value="Regulatory_protein_E2_N_2"/>
</dbReference>
<dbReference type="Pfam" id="PF00511">
    <property type="entry name" value="PPV_E2_C"/>
    <property type="match status" value="1"/>
</dbReference>
<dbReference type="Pfam" id="PF00508">
    <property type="entry name" value="PPV_E2_N"/>
    <property type="match status" value="1"/>
</dbReference>
<dbReference type="SUPFAM" id="SSF51332">
    <property type="entry name" value="E2 regulatory, transactivation domain"/>
    <property type="match status" value="1"/>
</dbReference>
<dbReference type="SUPFAM" id="SSF54957">
    <property type="entry name" value="Viral DNA-binding domain"/>
    <property type="match status" value="1"/>
</dbReference>
<proteinExistence type="inferred from homology"/>
<feature type="chain" id="PRO_0000133194" description="Regulatory protein E2">
    <location>
        <begin position="1"/>
        <end position="382"/>
    </location>
</feature>
<feature type="region of interest" description="Transactivation domain" evidence="1">
    <location>
        <begin position="1"/>
        <end position="127"/>
    </location>
</feature>
<feature type="region of interest" description="Disordered" evidence="2">
    <location>
        <begin position="124"/>
        <end position="282"/>
    </location>
</feature>
<feature type="region of interest" description="DNA-binding domain" evidence="1">
    <location>
        <begin position="298"/>
        <end position="382"/>
    </location>
</feature>
<feature type="compositionally biased region" description="Polar residues" evidence="2">
    <location>
        <begin position="146"/>
        <end position="156"/>
    </location>
</feature>
<feature type="compositionally biased region" description="Basic and acidic residues" evidence="2">
    <location>
        <begin position="163"/>
        <end position="175"/>
    </location>
</feature>
<feature type="compositionally biased region" description="Basic residues" evidence="2">
    <location>
        <begin position="250"/>
        <end position="260"/>
    </location>
</feature>
<feature type="compositionally biased region" description="Low complexity" evidence="2">
    <location>
        <begin position="261"/>
        <end position="270"/>
    </location>
</feature>
<organismHost>
    <name type="scientific">Homo sapiens</name>
    <name type="common">Human</name>
    <dbReference type="NCBI Taxonomy" id="9606"/>
</organismHost>
<keyword id="KW-0010">Activator</keyword>
<keyword id="KW-0235">DNA replication</keyword>
<keyword id="KW-0238">DNA-binding</keyword>
<keyword id="KW-0244">Early protein</keyword>
<keyword id="KW-1048">Host nucleus</keyword>
<keyword id="KW-0597">Phosphoprotein</keyword>
<keyword id="KW-1185">Reference proteome</keyword>
<keyword id="KW-0678">Repressor</keyword>
<keyword id="KW-0804">Transcription</keyword>
<keyword id="KW-0805">Transcription regulation</keyword>
<name>VE2_HPV15</name>
<evidence type="ECO:0000255" key="1">
    <source>
        <dbReference type="HAMAP-Rule" id="MF_04001"/>
    </source>
</evidence>
<evidence type="ECO:0000256" key="2">
    <source>
        <dbReference type="SAM" id="MobiDB-lite"/>
    </source>
</evidence>
<sequence>MVILLQSLQKSAYGKEPWTLTQTSLETVRSAPANCFKKGPQNIEVMFDKDPENIMVYTVWTYIYYQTLDDTWNKVEGKIDYHGAYYLEGTLKVYYIQFEVDAARFGKTGIWEVHVNEDTIFAPVTSSSPAAGEGATSIDSAPESPANRQLSSTSVSSRKRTPPRTEARRYNRKESSPTTTTTRRQKRQGQRQEDTARRSRSTSRGRQEISRGGNQRRRRRSRETSISPAWGRGGRSRRGPTTRSQSKSLSRSRSRSKSRSRGSSPRGGISPADVGSSVRSLGRKHTGRLERLLEEARDPPVILLRGDANKLKCFRFRAKKKYQDLVKYYSTTWSWVGGTSNDRIGRSRLLLAFSSNTERELFIKIMKLPPGVDWSLGYLDDL</sequence>
<accession>P36784</accession>
<organism>
    <name type="scientific">Human papillomavirus 15</name>
    <dbReference type="NCBI Taxonomy" id="10606"/>
    <lineage>
        <taxon>Viruses</taxon>
        <taxon>Monodnaviria</taxon>
        <taxon>Shotokuvirae</taxon>
        <taxon>Cossaviricota</taxon>
        <taxon>Papovaviricetes</taxon>
        <taxon>Zurhausenvirales</taxon>
        <taxon>Papillomaviridae</taxon>
        <taxon>Firstpapillomavirinae</taxon>
        <taxon>Betapapillomavirus</taxon>
        <taxon>Betapapillomavirus 2</taxon>
    </lineage>
</organism>
<gene>
    <name evidence="1" type="primary">E2</name>
</gene>